<gene>
    <name evidence="1" type="primary">zapA</name>
    <name type="ordered locus">EcolC_0799</name>
</gene>
<keyword id="KW-0131">Cell cycle</keyword>
<keyword id="KW-0132">Cell division</keyword>
<keyword id="KW-0175">Coiled coil</keyword>
<keyword id="KW-0963">Cytoplasm</keyword>
<keyword id="KW-0717">Septation</keyword>
<evidence type="ECO:0000255" key="1">
    <source>
        <dbReference type="HAMAP-Rule" id="MF_02012"/>
    </source>
</evidence>
<comment type="function">
    <text evidence="1">Activator of cell division through the inhibition of FtsZ GTPase activity, therefore promoting FtsZ assembly into bundles of protofilaments necessary for the formation of the division Z ring. It is recruited early at mid-cell but it is not essential for cell division.</text>
</comment>
<comment type="subunit">
    <text evidence="1">Homodimer. Interacts with FtsZ.</text>
</comment>
<comment type="subcellular location">
    <subcellularLocation>
        <location evidence="1">Cytoplasm</location>
    </subcellularLocation>
    <text evidence="1">Localizes at mid-cell.</text>
</comment>
<comment type="similarity">
    <text evidence="1">Belongs to the ZapA family. Type 1 subfamily.</text>
</comment>
<reference key="1">
    <citation type="submission" date="2008-02" db="EMBL/GenBank/DDBJ databases">
        <title>Complete sequence of Escherichia coli C str. ATCC 8739.</title>
        <authorList>
            <person name="Copeland A."/>
            <person name="Lucas S."/>
            <person name="Lapidus A."/>
            <person name="Glavina del Rio T."/>
            <person name="Dalin E."/>
            <person name="Tice H."/>
            <person name="Bruce D."/>
            <person name="Goodwin L."/>
            <person name="Pitluck S."/>
            <person name="Kiss H."/>
            <person name="Brettin T."/>
            <person name="Detter J.C."/>
            <person name="Han C."/>
            <person name="Kuske C.R."/>
            <person name="Schmutz J."/>
            <person name="Larimer F."/>
            <person name="Land M."/>
            <person name="Hauser L."/>
            <person name="Kyrpides N."/>
            <person name="Mikhailova N."/>
            <person name="Ingram L."/>
            <person name="Richardson P."/>
        </authorList>
    </citation>
    <scope>NUCLEOTIDE SEQUENCE [LARGE SCALE GENOMIC DNA]</scope>
    <source>
        <strain>ATCC 8739 / DSM 1576 / NBRC 3972 / NCIMB 8545 / WDCM 00012 / Crooks</strain>
    </source>
</reference>
<feature type="chain" id="PRO_0000345643" description="Cell division protein ZapA">
    <location>
        <begin position="1"/>
        <end position="109"/>
    </location>
</feature>
<feature type="coiled-coil region" evidence="1">
    <location>
        <begin position="21"/>
        <end position="99"/>
    </location>
</feature>
<protein>
    <recommendedName>
        <fullName evidence="1">Cell division protein ZapA</fullName>
    </recommendedName>
    <alternativeName>
        <fullName evidence="1">Z ring-associated protein ZapA</fullName>
    </alternativeName>
</protein>
<name>ZAPA_ECOLC</name>
<accession>B1IT92</accession>
<dbReference type="EMBL" id="CP000946">
    <property type="protein sequence ID" value="ACA76471.1"/>
    <property type="molecule type" value="Genomic_DNA"/>
</dbReference>
<dbReference type="RefSeq" id="WP_001276008.1">
    <property type="nucleotide sequence ID" value="NZ_MTFT01000004.1"/>
</dbReference>
<dbReference type="SMR" id="B1IT92"/>
<dbReference type="GeneID" id="93779091"/>
<dbReference type="KEGG" id="ecl:EcolC_0799"/>
<dbReference type="HOGENOM" id="CLU_116623_3_0_6"/>
<dbReference type="GO" id="GO:0032153">
    <property type="term" value="C:cell division site"/>
    <property type="evidence" value="ECO:0007669"/>
    <property type="project" value="TreeGrafter"/>
</dbReference>
<dbReference type="GO" id="GO:0030428">
    <property type="term" value="C:cell septum"/>
    <property type="evidence" value="ECO:0007669"/>
    <property type="project" value="TreeGrafter"/>
</dbReference>
<dbReference type="GO" id="GO:0005829">
    <property type="term" value="C:cytosol"/>
    <property type="evidence" value="ECO:0007669"/>
    <property type="project" value="TreeGrafter"/>
</dbReference>
<dbReference type="GO" id="GO:0005886">
    <property type="term" value="C:plasma membrane"/>
    <property type="evidence" value="ECO:0007669"/>
    <property type="project" value="UniProtKB-UniRule"/>
</dbReference>
<dbReference type="GO" id="GO:0000917">
    <property type="term" value="P:division septum assembly"/>
    <property type="evidence" value="ECO:0007669"/>
    <property type="project" value="UniProtKB-KW"/>
</dbReference>
<dbReference type="GO" id="GO:0043093">
    <property type="term" value="P:FtsZ-dependent cytokinesis"/>
    <property type="evidence" value="ECO:0007669"/>
    <property type="project" value="TreeGrafter"/>
</dbReference>
<dbReference type="GO" id="GO:0000921">
    <property type="term" value="P:septin ring assembly"/>
    <property type="evidence" value="ECO:0007669"/>
    <property type="project" value="TreeGrafter"/>
</dbReference>
<dbReference type="FunFam" id="1.20.5.50:FF:000001">
    <property type="entry name" value="Cell division protein ZapA"/>
    <property type="match status" value="1"/>
</dbReference>
<dbReference type="FunFam" id="3.30.160.880:FF:000001">
    <property type="entry name" value="Cell division protein ZapA"/>
    <property type="match status" value="1"/>
</dbReference>
<dbReference type="Gene3D" id="1.20.5.50">
    <property type="match status" value="1"/>
</dbReference>
<dbReference type="Gene3D" id="3.30.160.880">
    <property type="entry name" value="Cell division protein ZapA protomer, N-terminal domain"/>
    <property type="match status" value="1"/>
</dbReference>
<dbReference type="HAMAP" id="MF_02012">
    <property type="entry name" value="ZapA_type1"/>
    <property type="match status" value="1"/>
</dbReference>
<dbReference type="InterPro" id="IPR007838">
    <property type="entry name" value="Cell_div_ZapA-like"/>
</dbReference>
<dbReference type="InterPro" id="IPR036192">
    <property type="entry name" value="Cell_div_ZapA-like_sf"/>
</dbReference>
<dbReference type="InterPro" id="IPR023771">
    <property type="entry name" value="Cell_div_ZapA_eubact"/>
</dbReference>
<dbReference type="InterPro" id="IPR042233">
    <property type="entry name" value="Cell_div_ZapA_N"/>
</dbReference>
<dbReference type="NCBIfam" id="NF008209">
    <property type="entry name" value="PRK10972.1"/>
    <property type="match status" value="1"/>
</dbReference>
<dbReference type="PANTHER" id="PTHR34981">
    <property type="entry name" value="CELL DIVISION PROTEIN ZAPA"/>
    <property type="match status" value="1"/>
</dbReference>
<dbReference type="PANTHER" id="PTHR34981:SF1">
    <property type="entry name" value="CELL DIVISION PROTEIN ZAPA"/>
    <property type="match status" value="1"/>
</dbReference>
<dbReference type="Pfam" id="PF05164">
    <property type="entry name" value="ZapA"/>
    <property type="match status" value="1"/>
</dbReference>
<dbReference type="SUPFAM" id="SSF102829">
    <property type="entry name" value="Cell division protein ZapA-like"/>
    <property type="match status" value="1"/>
</dbReference>
<organism>
    <name type="scientific">Escherichia coli (strain ATCC 8739 / DSM 1576 / NBRC 3972 / NCIMB 8545 / WDCM 00012 / Crooks)</name>
    <dbReference type="NCBI Taxonomy" id="481805"/>
    <lineage>
        <taxon>Bacteria</taxon>
        <taxon>Pseudomonadati</taxon>
        <taxon>Pseudomonadota</taxon>
        <taxon>Gammaproteobacteria</taxon>
        <taxon>Enterobacterales</taxon>
        <taxon>Enterobacteriaceae</taxon>
        <taxon>Escherichia</taxon>
    </lineage>
</organism>
<proteinExistence type="inferred from homology"/>
<sequence length="109" mass="12594">MSAQPVDIQIFGRSLRVNCPPDQRDALNQAADDLNQRLQDLKERTRVTNTEQLVFIAALNISYELAQEKAKTRDYAASMEQRIRMLQQTIEQALLEQGRITEKTNQNFE</sequence>